<reference key="1">
    <citation type="journal article" date="2009" name="Genome Biol.">
        <title>Genomic and genetic analyses of diversity and plant interactions of Pseudomonas fluorescens.</title>
        <authorList>
            <person name="Silby M.W."/>
            <person name="Cerdeno-Tarraga A.M."/>
            <person name="Vernikos G.S."/>
            <person name="Giddens S.R."/>
            <person name="Jackson R.W."/>
            <person name="Preston G.M."/>
            <person name="Zhang X.-X."/>
            <person name="Moon C.D."/>
            <person name="Gehrig S.M."/>
            <person name="Godfrey S.A.C."/>
            <person name="Knight C.G."/>
            <person name="Malone J.G."/>
            <person name="Robinson Z."/>
            <person name="Spiers A.J."/>
            <person name="Harris S."/>
            <person name="Challis G.L."/>
            <person name="Yaxley A.M."/>
            <person name="Harris D."/>
            <person name="Seeger K."/>
            <person name="Murphy L."/>
            <person name="Rutter S."/>
            <person name="Squares R."/>
            <person name="Quail M.A."/>
            <person name="Saunders E."/>
            <person name="Mavromatis K."/>
            <person name="Brettin T.S."/>
            <person name="Bentley S.D."/>
            <person name="Hothersall J."/>
            <person name="Stephens E."/>
            <person name="Thomas C.M."/>
            <person name="Parkhill J."/>
            <person name="Levy S.B."/>
            <person name="Rainey P.B."/>
            <person name="Thomson N.R."/>
        </authorList>
    </citation>
    <scope>NUCLEOTIDE SEQUENCE [LARGE SCALE GENOMIC DNA]</scope>
    <source>
        <strain>SBW25</strain>
    </source>
</reference>
<gene>
    <name evidence="1" type="primary">arnC</name>
    <name type="ordered locus">PFLU_3042</name>
</gene>
<keyword id="KW-0046">Antibiotic resistance</keyword>
<keyword id="KW-0997">Cell inner membrane</keyword>
<keyword id="KW-1003">Cell membrane</keyword>
<keyword id="KW-0328">Glycosyltransferase</keyword>
<keyword id="KW-0441">Lipid A biosynthesis</keyword>
<keyword id="KW-0444">Lipid biosynthesis</keyword>
<keyword id="KW-0443">Lipid metabolism</keyword>
<keyword id="KW-0448">Lipopolysaccharide biosynthesis</keyword>
<keyword id="KW-0472">Membrane</keyword>
<keyword id="KW-0808">Transferase</keyword>
<keyword id="KW-0812">Transmembrane</keyword>
<keyword id="KW-1133">Transmembrane helix</keyword>
<proteinExistence type="inferred from homology"/>
<protein>
    <recommendedName>
        <fullName evidence="1">Undecaprenyl-phosphate 4-deoxy-4-formamido-L-arabinose transferase</fullName>
        <ecNumber evidence="1">2.4.2.53</ecNumber>
    </recommendedName>
    <alternativeName>
        <fullName evidence="1">Undecaprenyl-phosphate Ara4FN transferase</fullName>
        <shortName evidence="1">Ara4FN transferase</shortName>
    </alternativeName>
</protein>
<organism>
    <name type="scientific">Pseudomonas fluorescens (strain SBW25)</name>
    <dbReference type="NCBI Taxonomy" id="216595"/>
    <lineage>
        <taxon>Bacteria</taxon>
        <taxon>Pseudomonadati</taxon>
        <taxon>Pseudomonadota</taxon>
        <taxon>Gammaproteobacteria</taxon>
        <taxon>Pseudomonadales</taxon>
        <taxon>Pseudomonadaceae</taxon>
        <taxon>Pseudomonas</taxon>
    </lineage>
</organism>
<sequence length="341" mass="37725">MKPYPIHCVSIVIPVYNEQESLPELLRRTTAACKQLAYEYEIILVDDGSRDNSAQLLEDAAAEDGSNVVAVILNRNYGQHAAIMAGFEQCRGDVVITLDADLQNPPEEIPRLVEQAALGYDVVATVRNNRQDSAFRRWPSRLINLAVQRSTGVAMTDYGCMLRAYRRTIVDAMLACRERSTFIPILANGFARHTTEILVHHAEREHGESKYSAMRLISLMFDLLTCMTTTPLRLLSIVGFSLAALGMLFAFALIVMRLAFGADWAGDGLFVLFAVLFVFTGGQFIGMGLLGEYLGRMYSDVRARPRFFIEKVLRNQPAAPAPVVVVDGLVSSHTSTSADQV</sequence>
<name>ARNC_PSEFS</name>
<comment type="function">
    <text evidence="1">Catalyzes the transfer of 4-deoxy-4-formamido-L-arabinose from UDP to undecaprenyl phosphate. The modified arabinose is attached to lipid A and is required for resistance to polymyxin and cationic antimicrobial peptides.</text>
</comment>
<comment type="catalytic activity">
    <reaction evidence="1">
        <text>UDP-4-deoxy-4-formamido-beta-L-arabinose + di-trans,octa-cis-undecaprenyl phosphate = 4-deoxy-4-formamido-alpha-L-arabinopyranosyl di-trans,octa-cis-undecaprenyl phosphate + UDP</text>
        <dbReference type="Rhea" id="RHEA:27722"/>
        <dbReference type="ChEBI" id="CHEBI:58223"/>
        <dbReference type="ChEBI" id="CHEBI:58709"/>
        <dbReference type="ChEBI" id="CHEBI:58909"/>
        <dbReference type="ChEBI" id="CHEBI:60392"/>
        <dbReference type="EC" id="2.4.2.53"/>
    </reaction>
</comment>
<comment type="pathway">
    <text evidence="1">Glycolipid biosynthesis; 4-amino-4-deoxy-alpha-L-arabinose undecaprenyl phosphate biosynthesis; 4-amino-4-deoxy-alpha-L-arabinose undecaprenyl phosphate from UDP-4-deoxy-4-formamido-beta-L-arabinose and undecaprenyl phosphate: step 1/2.</text>
</comment>
<comment type="pathway">
    <text evidence="1">Bacterial outer membrane biogenesis; lipopolysaccharide biosynthesis.</text>
</comment>
<comment type="subcellular location">
    <subcellularLocation>
        <location evidence="1">Cell inner membrane</location>
        <topology evidence="1">Multi-pass membrane protein</topology>
    </subcellularLocation>
</comment>
<comment type="similarity">
    <text evidence="1">Belongs to the glycosyltransferase 2 family.</text>
</comment>
<dbReference type="EC" id="2.4.2.53" evidence="1"/>
<dbReference type="EMBL" id="AM181176">
    <property type="protein sequence ID" value="CAY49271.1"/>
    <property type="molecule type" value="Genomic_DNA"/>
</dbReference>
<dbReference type="RefSeq" id="WP_012724222.1">
    <property type="nucleotide sequence ID" value="NC_012660.1"/>
</dbReference>
<dbReference type="SMR" id="C3KAD3"/>
<dbReference type="CAZy" id="GT2">
    <property type="family name" value="Glycosyltransferase Family 2"/>
</dbReference>
<dbReference type="GeneID" id="93464416"/>
<dbReference type="eggNOG" id="COG0463">
    <property type="taxonomic scope" value="Bacteria"/>
</dbReference>
<dbReference type="HOGENOM" id="CLU_033536_0_0_6"/>
<dbReference type="OrthoDB" id="9811884at2"/>
<dbReference type="UniPathway" id="UPA00030"/>
<dbReference type="UniPathway" id="UPA00036">
    <property type="reaction ID" value="UER00495"/>
</dbReference>
<dbReference type="GO" id="GO:0005886">
    <property type="term" value="C:plasma membrane"/>
    <property type="evidence" value="ECO:0007669"/>
    <property type="project" value="UniProtKB-SubCell"/>
</dbReference>
<dbReference type="GO" id="GO:0016780">
    <property type="term" value="F:phosphotransferase activity, for other substituted phosphate groups"/>
    <property type="evidence" value="ECO:0007669"/>
    <property type="project" value="UniProtKB-UniRule"/>
</dbReference>
<dbReference type="GO" id="GO:0099621">
    <property type="term" value="F:undecaprenyl-phosphate 4-deoxy-4-formamido-L-arabinose transferase activity"/>
    <property type="evidence" value="ECO:0007669"/>
    <property type="project" value="UniProtKB-EC"/>
</dbReference>
<dbReference type="GO" id="GO:0036108">
    <property type="term" value="P:4-amino-4-deoxy-alpha-L-arabinopyranosyl undecaprenyl phosphate biosynthetic process"/>
    <property type="evidence" value="ECO:0007669"/>
    <property type="project" value="UniProtKB-UniRule"/>
</dbReference>
<dbReference type="GO" id="GO:0009245">
    <property type="term" value="P:lipid A biosynthetic process"/>
    <property type="evidence" value="ECO:0007669"/>
    <property type="project" value="UniProtKB-UniRule"/>
</dbReference>
<dbReference type="GO" id="GO:0009103">
    <property type="term" value="P:lipopolysaccharide biosynthetic process"/>
    <property type="evidence" value="ECO:0007669"/>
    <property type="project" value="UniProtKB-UniRule"/>
</dbReference>
<dbReference type="GO" id="GO:0046677">
    <property type="term" value="P:response to antibiotic"/>
    <property type="evidence" value="ECO:0007669"/>
    <property type="project" value="UniProtKB-KW"/>
</dbReference>
<dbReference type="CDD" id="cd04187">
    <property type="entry name" value="DPM1_like_bac"/>
    <property type="match status" value="1"/>
</dbReference>
<dbReference type="Gene3D" id="3.90.550.10">
    <property type="entry name" value="Spore Coat Polysaccharide Biosynthesis Protein SpsA, Chain A"/>
    <property type="match status" value="1"/>
</dbReference>
<dbReference type="HAMAP" id="MF_01164">
    <property type="entry name" value="ArnC_transfer"/>
    <property type="match status" value="1"/>
</dbReference>
<dbReference type="InterPro" id="IPR022857">
    <property type="entry name" value="ArnC_tfrase"/>
</dbReference>
<dbReference type="InterPro" id="IPR001173">
    <property type="entry name" value="Glyco_trans_2-like"/>
</dbReference>
<dbReference type="InterPro" id="IPR050256">
    <property type="entry name" value="Glycosyltransferase_2"/>
</dbReference>
<dbReference type="InterPro" id="IPR029044">
    <property type="entry name" value="Nucleotide-diphossugar_trans"/>
</dbReference>
<dbReference type="NCBIfam" id="NF007986">
    <property type="entry name" value="PRK10714.1"/>
    <property type="match status" value="1"/>
</dbReference>
<dbReference type="PANTHER" id="PTHR48090:SF3">
    <property type="entry name" value="UNDECAPRENYL-PHOSPHATE 4-DEOXY-4-FORMAMIDO-L-ARABINOSE TRANSFERASE"/>
    <property type="match status" value="1"/>
</dbReference>
<dbReference type="PANTHER" id="PTHR48090">
    <property type="entry name" value="UNDECAPRENYL-PHOSPHATE 4-DEOXY-4-FORMAMIDO-L-ARABINOSE TRANSFERASE-RELATED"/>
    <property type="match status" value="1"/>
</dbReference>
<dbReference type="Pfam" id="PF00535">
    <property type="entry name" value="Glycos_transf_2"/>
    <property type="match status" value="1"/>
</dbReference>
<dbReference type="SUPFAM" id="SSF53448">
    <property type="entry name" value="Nucleotide-diphospho-sugar transferases"/>
    <property type="match status" value="1"/>
</dbReference>
<evidence type="ECO:0000255" key="1">
    <source>
        <dbReference type="HAMAP-Rule" id="MF_01164"/>
    </source>
</evidence>
<accession>C3KAD3</accession>
<feature type="chain" id="PRO_0000380269" description="Undecaprenyl-phosphate 4-deoxy-4-formamido-L-arabinose transferase">
    <location>
        <begin position="1"/>
        <end position="341"/>
    </location>
</feature>
<feature type="transmembrane region" description="Helical" evidence="1">
    <location>
        <begin position="235"/>
        <end position="255"/>
    </location>
</feature>
<feature type="transmembrane region" description="Helical" evidence="1">
    <location>
        <begin position="269"/>
        <end position="289"/>
    </location>
</feature>